<reference key="1">
    <citation type="journal article" date="2008" name="Genome Res.">
        <title>Comparative genome analysis of Salmonella enteritidis PT4 and Salmonella gallinarum 287/91 provides insights into evolutionary and host adaptation pathways.</title>
        <authorList>
            <person name="Thomson N.R."/>
            <person name="Clayton D.J."/>
            <person name="Windhorst D."/>
            <person name="Vernikos G."/>
            <person name="Davidson S."/>
            <person name="Churcher C."/>
            <person name="Quail M.A."/>
            <person name="Stevens M."/>
            <person name="Jones M.A."/>
            <person name="Watson M."/>
            <person name="Barron A."/>
            <person name="Layton A."/>
            <person name="Pickard D."/>
            <person name="Kingsley R.A."/>
            <person name="Bignell A."/>
            <person name="Clark L."/>
            <person name="Harris B."/>
            <person name="Ormond D."/>
            <person name="Abdellah Z."/>
            <person name="Brooks K."/>
            <person name="Cherevach I."/>
            <person name="Chillingworth T."/>
            <person name="Woodward J."/>
            <person name="Norberczak H."/>
            <person name="Lord A."/>
            <person name="Arrowsmith C."/>
            <person name="Jagels K."/>
            <person name="Moule S."/>
            <person name="Mungall K."/>
            <person name="Saunders M."/>
            <person name="Whitehead S."/>
            <person name="Chabalgoity J.A."/>
            <person name="Maskell D."/>
            <person name="Humphreys T."/>
            <person name="Roberts M."/>
            <person name="Barrow P.A."/>
            <person name="Dougan G."/>
            <person name="Parkhill J."/>
        </authorList>
    </citation>
    <scope>NUCLEOTIDE SEQUENCE [LARGE SCALE GENOMIC DNA]</scope>
    <source>
        <strain>287/91 / NCTC 13346</strain>
    </source>
</reference>
<accession>B5RGA4</accession>
<comment type="function">
    <text evidence="1">Catalyzes the reversible dehydration of L-carnitinyl-CoA to crotonobetainyl-CoA.</text>
</comment>
<comment type="catalytic activity">
    <reaction evidence="1">
        <text>(R)-carnitinyl-CoA = crotonobetainyl-CoA + H2O</text>
        <dbReference type="Rhea" id="RHEA:28338"/>
        <dbReference type="ChEBI" id="CHEBI:15377"/>
        <dbReference type="ChEBI" id="CHEBI:60932"/>
        <dbReference type="ChEBI" id="CHEBI:60933"/>
        <dbReference type="EC" id="4.2.1.149"/>
    </reaction>
</comment>
<comment type="pathway">
    <text evidence="1">Amine and polyamine metabolism; carnitine metabolism.</text>
</comment>
<comment type="similarity">
    <text evidence="1">Belongs to the enoyl-CoA hydratase/isomerase family.</text>
</comment>
<evidence type="ECO:0000255" key="1">
    <source>
        <dbReference type="HAMAP-Rule" id="MF_01051"/>
    </source>
</evidence>
<sequence length="261" mass="28082">MSESLHLTRNGPILEITLDRPKANAIDAKTSFAMGEAFLNFRDDPELRVAIITGGGEKFFSAGWDLKAAAEGEAPDADFGSGGFAGLTEIFDLDKPVIAAVNGYAFGGGFELALAADFIVCAENASFALPEAKLGIVPDSGGVLRLPKLLPPAIVNEMVMTGRRMSAEEALRWGVVNRVVSQSELMDSARELAQQLVNSAPLAIAALKEIYRATSEMPVEEGYRYIRSGVLKHYPSVLHSEDALEGPQAFAEKRDPVWKGR</sequence>
<name>CAID_SALG2</name>
<proteinExistence type="inferred from homology"/>
<dbReference type="EC" id="4.2.1.149" evidence="1"/>
<dbReference type="EMBL" id="AM933173">
    <property type="protein sequence ID" value="CAR35980.1"/>
    <property type="molecule type" value="Genomic_DNA"/>
</dbReference>
<dbReference type="RefSeq" id="WP_000004387.1">
    <property type="nucleotide sequence ID" value="NC_011274.1"/>
</dbReference>
<dbReference type="SMR" id="B5RGA4"/>
<dbReference type="KEGG" id="seg:SG0073"/>
<dbReference type="HOGENOM" id="CLU_009834_7_6_6"/>
<dbReference type="UniPathway" id="UPA00117"/>
<dbReference type="Proteomes" id="UP000008321">
    <property type="component" value="Chromosome"/>
</dbReference>
<dbReference type="GO" id="GO:0016836">
    <property type="term" value="F:hydro-lyase activity"/>
    <property type="evidence" value="ECO:0007669"/>
    <property type="project" value="UniProtKB-UniRule"/>
</dbReference>
<dbReference type="GO" id="GO:0008735">
    <property type="term" value="F:L-carnitine CoA-transferase activity"/>
    <property type="evidence" value="ECO:0007669"/>
    <property type="project" value="RHEA"/>
</dbReference>
<dbReference type="GO" id="GO:0009437">
    <property type="term" value="P:carnitine metabolic process"/>
    <property type="evidence" value="ECO:0007669"/>
    <property type="project" value="UniProtKB-UniRule"/>
</dbReference>
<dbReference type="GO" id="GO:0006635">
    <property type="term" value="P:fatty acid beta-oxidation"/>
    <property type="evidence" value="ECO:0007669"/>
    <property type="project" value="TreeGrafter"/>
</dbReference>
<dbReference type="CDD" id="cd06558">
    <property type="entry name" value="crotonase-like"/>
    <property type="match status" value="1"/>
</dbReference>
<dbReference type="FunFam" id="1.10.12.10:FF:000005">
    <property type="entry name" value="Carnitinyl-CoA dehydratase"/>
    <property type="match status" value="1"/>
</dbReference>
<dbReference type="FunFam" id="3.90.226.10:FF:000009">
    <property type="entry name" value="Carnitinyl-CoA dehydratase"/>
    <property type="match status" value="1"/>
</dbReference>
<dbReference type="Gene3D" id="3.90.226.10">
    <property type="entry name" value="2-enoyl-CoA Hydratase, Chain A, domain 1"/>
    <property type="match status" value="1"/>
</dbReference>
<dbReference type="Gene3D" id="1.10.12.10">
    <property type="entry name" value="Lyase 2-enoyl-coa Hydratase, Chain A, domain 2"/>
    <property type="match status" value="1"/>
</dbReference>
<dbReference type="HAMAP" id="MF_01051">
    <property type="entry name" value="CaiD"/>
    <property type="match status" value="1"/>
</dbReference>
<dbReference type="InterPro" id="IPR022852">
    <property type="entry name" value="Carnitinyl_CoA_dehydratase"/>
</dbReference>
<dbReference type="InterPro" id="IPR029045">
    <property type="entry name" value="ClpP/crotonase-like_dom_sf"/>
</dbReference>
<dbReference type="InterPro" id="IPR018376">
    <property type="entry name" value="Enoyl-CoA_hyd/isom_CS"/>
</dbReference>
<dbReference type="InterPro" id="IPR001753">
    <property type="entry name" value="Enoyl-CoA_hydra/iso"/>
</dbReference>
<dbReference type="InterPro" id="IPR014748">
    <property type="entry name" value="Enoyl-CoA_hydra_C"/>
</dbReference>
<dbReference type="NCBIfam" id="NF002936">
    <property type="entry name" value="PRK03580.1"/>
    <property type="match status" value="1"/>
</dbReference>
<dbReference type="PANTHER" id="PTHR11941:SF54">
    <property type="entry name" value="ENOYL-COA HYDRATASE, MITOCHONDRIAL"/>
    <property type="match status" value="1"/>
</dbReference>
<dbReference type="PANTHER" id="PTHR11941">
    <property type="entry name" value="ENOYL-COA HYDRATASE-RELATED"/>
    <property type="match status" value="1"/>
</dbReference>
<dbReference type="Pfam" id="PF00378">
    <property type="entry name" value="ECH_1"/>
    <property type="match status" value="1"/>
</dbReference>
<dbReference type="SUPFAM" id="SSF52096">
    <property type="entry name" value="ClpP/crotonase"/>
    <property type="match status" value="1"/>
</dbReference>
<dbReference type="PROSITE" id="PS00166">
    <property type="entry name" value="ENOYL_COA_HYDRATASE"/>
    <property type="match status" value="1"/>
</dbReference>
<protein>
    <recommendedName>
        <fullName evidence="1">Carnitinyl-CoA dehydratase</fullName>
        <ecNumber evidence="1">4.2.1.149</ecNumber>
    </recommendedName>
    <alternativeName>
        <fullName evidence="1">Crotonobetainyl-CoA hydratase</fullName>
    </alternativeName>
</protein>
<keyword id="KW-0456">Lyase</keyword>
<organism>
    <name type="scientific">Salmonella gallinarum (strain 287/91 / NCTC 13346)</name>
    <dbReference type="NCBI Taxonomy" id="550538"/>
    <lineage>
        <taxon>Bacteria</taxon>
        <taxon>Pseudomonadati</taxon>
        <taxon>Pseudomonadota</taxon>
        <taxon>Gammaproteobacteria</taxon>
        <taxon>Enterobacterales</taxon>
        <taxon>Enterobacteriaceae</taxon>
        <taxon>Salmonella</taxon>
    </lineage>
</organism>
<gene>
    <name evidence="1" type="primary">caiD</name>
    <name type="ordered locus">SG0073</name>
</gene>
<feature type="chain" id="PRO_1000136263" description="Carnitinyl-CoA dehydratase">
    <location>
        <begin position="1"/>
        <end position="261"/>
    </location>
</feature>
<feature type="active site" description="Nucleophile" evidence="1">
    <location>
        <position position="111"/>
    </location>
</feature>
<feature type="active site" description="Proton acceptor" evidence="1">
    <location>
        <position position="131"/>
    </location>
</feature>